<keyword id="KW-1003">Cell membrane</keyword>
<keyword id="KW-0449">Lipoprotein</keyword>
<keyword id="KW-0472">Membrane</keyword>
<keyword id="KW-0564">Palmitate</keyword>
<keyword id="KW-1185">Reference proteome</keyword>
<keyword id="KW-0732">Signal</keyword>
<comment type="subcellular location">
    <subcellularLocation>
        <location evidence="1">Cell membrane</location>
        <topology evidence="1">Lipid-anchor</topology>
    </subcellularLocation>
</comment>
<comment type="similarity">
    <text evidence="3">Belongs to the MG185/MG260 family.</text>
</comment>
<name>Y284_MYCPN</name>
<feature type="signal peptide" evidence="1">
    <location>
        <begin position="1"/>
        <end position="22"/>
    </location>
</feature>
<feature type="chain" id="PRO_0000018730" description="Uncharacterized lipoprotein MPN_284">
    <location>
        <begin position="23"/>
        <end position="794"/>
    </location>
</feature>
<feature type="region of interest" description="Disordered" evidence="2">
    <location>
        <begin position="177"/>
        <end position="208"/>
    </location>
</feature>
<feature type="region of interest" description="Disordered" evidence="2">
    <location>
        <begin position="220"/>
        <end position="257"/>
    </location>
</feature>
<feature type="region of interest" description="Disordered" evidence="2">
    <location>
        <begin position="466"/>
        <end position="506"/>
    </location>
</feature>
<feature type="compositionally biased region" description="Polar residues" evidence="2">
    <location>
        <begin position="177"/>
        <end position="196"/>
    </location>
</feature>
<feature type="compositionally biased region" description="Low complexity" evidence="2">
    <location>
        <begin position="220"/>
        <end position="231"/>
    </location>
</feature>
<feature type="compositionally biased region" description="Polar residues" evidence="2">
    <location>
        <begin position="238"/>
        <end position="250"/>
    </location>
</feature>
<feature type="lipid moiety-binding region" description="N-palmitoyl cysteine" evidence="1">
    <location>
        <position position="23"/>
    </location>
</feature>
<feature type="lipid moiety-binding region" description="S-diacylglycerol cysteine" evidence="1">
    <location>
        <position position="23"/>
    </location>
</feature>
<gene>
    <name type="ordered locus">MPN_284</name>
    <name type="ORF">A65_orf794</name>
    <name type="ORF">MP551</name>
</gene>
<accession>P75493</accession>
<organism>
    <name type="scientific">Mycoplasma pneumoniae (strain ATCC 29342 / M129 / Subtype 1)</name>
    <name type="common">Mycoplasmoides pneumoniae</name>
    <dbReference type="NCBI Taxonomy" id="272634"/>
    <lineage>
        <taxon>Bacteria</taxon>
        <taxon>Bacillati</taxon>
        <taxon>Mycoplasmatota</taxon>
        <taxon>Mycoplasmoidales</taxon>
        <taxon>Mycoplasmoidaceae</taxon>
        <taxon>Mycoplasmoides</taxon>
    </lineage>
</organism>
<sequence>MKLKYGTIIFSGLLGVSAILAACGARGKFDQVDDGKIVLASSLTSKGAANALQTIVKKYNEVKNIDDYPIEIIQIAGGYDGGRGNLQTKLSVKDKNSFYNLILNYPDVVSVLGRVGMELPFDKVRTDKLSPRFLDFNKRISAISKQGIYGIPVSLSTEVLVLNGPVLHYILSSAKGSSGKTQVSQTSSGSNQQKTLQKPLKIDTSDSSTSSLWTQIENAAKNNGKKANNSKSNRRSTDQSTQTHNDQGDASESDKKIKESWGDYEEVDGGLKGFTFKASIFDNWHDLLDFSTRAAKSFKKIKDNNTKKGTDIQGILGVDSSANSLFTSVFAAGNGDYDNFFYKVANGRADFSNFKNRGSSFQNLQSVFNDYKGLIDQNGLFVNKGGSYSSNFQKFHQLAYSISSTSGFYYSFAGNSAKRLKFGDNSFIEYPQYTVPIKAPSKNGDGNSTNSNSDLLGTFTLSSVKKSTDKSKSDSQQNQGKKVEGTPNQGKKAEGAQNQGKKENNSTTIEIYKNKIPDGKNAGKDAILIKDNNLIKQLEDAAKKNGAESNQKQGGESNVQKEQIIGYTTTGNVREDGNHIFRVDKINDEQYDRKIIVGVTVETLEQSSTLQSEEAIVLAAPGKYKSTDKKKVTITQGPNIIGIHANEKENAETQKFVDWFLNTEVDWPAKENSSNKQDQQNSTKKQTAAEFFVESASYILPLKEIFENKEKKENTSNSDKNKSSSQRKNTYAEKALELFQQISKDEIVSYSDPSDFRSGKFRDGIGSNFNAAVSSKADFNKFVKGFIATLGSEI</sequence>
<dbReference type="EMBL" id="U00089">
    <property type="protein sequence ID" value="AAB96199.1"/>
    <property type="molecule type" value="Genomic_DNA"/>
</dbReference>
<dbReference type="PIR" id="S73877">
    <property type="entry name" value="S73877"/>
</dbReference>
<dbReference type="RefSeq" id="NP_109972.1">
    <property type="nucleotide sequence ID" value="NC_000912.1"/>
</dbReference>
<dbReference type="RefSeq" id="WP_010874641.1">
    <property type="nucleotide sequence ID" value="NZ_OU342337.1"/>
</dbReference>
<dbReference type="IntAct" id="P75493">
    <property type="interactions" value="1"/>
</dbReference>
<dbReference type="STRING" id="272634.MPN_284"/>
<dbReference type="EnsemblBacteria" id="AAB96199">
    <property type="protein sequence ID" value="AAB96199"/>
    <property type="gene ID" value="MPN_284"/>
</dbReference>
<dbReference type="KEGG" id="mpn:MPN_284"/>
<dbReference type="PATRIC" id="fig|272634.6.peg.306"/>
<dbReference type="HOGENOM" id="CLU_017227_1_0_14"/>
<dbReference type="OrthoDB" id="393769at2"/>
<dbReference type="BioCyc" id="MPNE272634:G1GJ3-445-MONOMER"/>
<dbReference type="Proteomes" id="UP000000808">
    <property type="component" value="Chromosome"/>
</dbReference>
<dbReference type="GO" id="GO:0005886">
    <property type="term" value="C:plasma membrane"/>
    <property type="evidence" value="ECO:0007669"/>
    <property type="project" value="UniProtKB-SubCell"/>
</dbReference>
<dbReference type="InterPro" id="IPR004890">
    <property type="entry name" value="Lipoprotein_10_C"/>
</dbReference>
<dbReference type="InterPro" id="IPR004984">
    <property type="entry name" value="Mycoplasma_lipoprotein_cen_dom"/>
</dbReference>
<dbReference type="InterPro" id="IPR054825">
    <property type="entry name" value="P68-like"/>
</dbReference>
<dbReference type="NCBIfam" id="NF045826">
    <property type="entry name" value="lipo_P68"/>
    <property type="match status" value="1"/>
</dbReference>
<dbReference type="Pfam" id="PF03202">
    <property type="entry name" value="Lipoprotein_10"/>
    <property type="match status" value="1"/>
</dbReference>
<dbReference type="Pfam" id="PF03305">
    <property type="entry name" value="Lipoprotein_X"/>
    <property type="match status" value="1"/>
</dbReference>
<dbReference type="PROSITE" id="PS51257">
    <property type="entry name" value="PROKAR_LIPOPROTEIN"/>
    <property type="match status" value="1"/>
</dbReference>
<proteinExistence type="inferred from homology"/>
<reference key="1">
    <citation type="journal article" date="1996" name="Nucleic Acids Res.">
        <title>Complete sequence analysis of the genome of the bacterium Mycoplasma pneumoniae.</title>
        <authorList>
            <person name="Himmelreich R."/>
            <person name="Hilbert H."/>
            <person name="Plagens H."/>
            <person name="Pirkl E."/>
            <person name="Li B.-C."/>
            <person name="Herrmann R."/>
        </authorList>
    </citation>
    <scope>NUCLEOTIDE SEQUENCE [LARGE SCALE GENOMIC DNA]</scope>
    <source>
        <strain>ATCC 29342 / M129 / Subtype 1</strain>
    </source>
</reference>
<protein>
    <recommendedName>
        <fullName>Uncharacterized lipoprotein MPN_284</fullName>
    </recommendedName>
</protein>
<evidence type="ECO:0000255" key="1">
    <source>
        <dbReference type="PROSITE-ProRule" id="PRU00303"/>
    </source>
</evidence>
<evidence type="ECO:0000256" key="2">
    <source>
        <dbReference type="SAM" id="MobiDB-lite"/>
    </source>
</evidence>
<evidence type="ECO:0000305" key="3"/>